<dbReference type="EC" id="6.1.1.15" evidence="1"/>
<dbReference type="EMBL" id="AM263198">
    <property type="protein sequence ID" value="CAK20752.1"/>
    <property type="molecule type" value="Genomic_DNA"/>
</dbReference>
<dbReference type="RefSeq" id="WP_011702137.1">
    <property type="nucleotide sequence ID" value="NC_008555.1"/>
</dbReference>
<dbReference type="SMR" id="A0AIC0"/>
<dbReference type="STRING" id="386043.lwe1334"/>
<dbReference type="GeneID" id="61189211"/>
<dbReference type="KEGG" id="lwe:lwe1334"/>
<dbReference type="eggNOG" id="COG0442">
    <property type="taxonomic scope" value="Bacteria"/>
</dbReference>
<dbReference type="HOGENOM" id="CLU_016739_0_0_9"/>
<dbReference type="OrthoDB" id="9809052at2"/>
<dbReference type="Proteomes" id="UP000000779">
    <property type="component" value="Chromosome"/>
</dbReference>
<dbReference type="GO" id="GO:0005829">
    <property type="term" value="C:cytosol"/>
    <property type="evidence" value="ECO:0007669"/>
    <property type="project" value="TreeGrafter"/>
</dbReference>
<dbReference type="GO" id="GO:0002161">
    <property type="term" value="F:aminoacyl-tRNA deacylase activity"/>
    <property type="evidence" value="ECO:0007669"/>
    <property type="project" value="InterPro"/>
</dbReference>
<dbReference type="GO" id="GO:0005524">
    <property type="term" value="F:ATP binding"/>
    <property type="evidence" value="ECO:0007669"/>
    <property type="project" value="UniProtKB-UniRule"/>
</dbReference>
<dbReference type="GO" id="GO:0140096">
    <property type="term" value="F:catalytic activity, acting on a protein"/>
    <property type="evidence" value="ECO:0007669"/>
    <property type="project" value="UniProtKB-ARBA"/>
</dbReference>
<dbReference type="GO" id="GO:0004827">
    <property type="term" value="F:proline-tRNA ligase activity"/>
    <property type="evidence" value="ECO:0007669"/>
    <property type="project" value="UniProtKB-UniRule"/>
</dbReference>
<dbReference type="GO" id="GO:0016740">
    <property type="term" value="F:transferase activity"/>
    <property type="evidence" value="ECO:0007669"/>
    <property type="project" value="UniProtKB-ARBA"/>
</dbReference>
<dbReference type="GO" id="GO:0006433">
    <property type="term" value="P:prolyl-tRNA aminoacylation"/>
    <property type="evidence" value="ECO:0007669"/>
    <property type="project" value="UniProtKB-UniRule"/>
</dbReference>
<dbReference type="CDD" id="cd04334">
    <property type="entry name" value="ProRS-INS"/>
    <property type="match status" value="1"/>
</dbReference>
<dbReference type="CDD" id="cd00861">
    <property type="entry name" value="ProRS_anticodon_short"/>
    <property type="match status" value="1"/>
</dbReference>
<dbReference type="CDD" id="cd00779">
    <property type="entry name" value="ProRS_core_prok"/>
    <property type="match status" value="1"/>
</dbReference>
<dbReference type="FunFam" id="3.30.930.10:FF:000043">
    <property type="entry name" value="Proline--tRNA ligase"/>
    <property type="match status" value="1"/>
</dbReference>
<dbReference type="FunFam" id="3.30.930.10:FF:000088">
    <property type="entry name" value="Proline--tRNA ligase"/>
    <property type="match status" value="1"/>
</dbReference>
<dbReference type="FunFam" id="3.40.50.800:FF:000011">
    <property type="entry name" value="Proline--tRNA ligase"/>
    <property type="match status" value="1"/>
</dbReference>
<dbReference type="Gene3D" id="3.40.50.800">
    <property type="entry name" value="Anticodon-binding domain"/>
    <property type="match status" value="1"/>
</dbReference>
<dbReference type="Gene3D" id="3.30.930.10">
    <property type="entry name" value="Bira Bifunctional Protein, Domain 2"/>
    <property type="match status" value="2"/>
</dbReference>
<dbReference type="HAMAP" id="MF_01569">
    <property type="entry name" value="Pro_tRNA_synth_type1"/>
    <property type="match status" value="1"/>
</dbReference>
<dbReference type="InterPro" id="IPR002314">
    <property type="entry name" value="aa-tRNA-synt_IIb"/>
</dbReference>
<dbReference type="InterPro" id="IPR006195">
    <property type="entry name" value="aa-tRNA-synth_II"/>
</dbReference>
<dbReference type="InterPro" id="IPR045864">
    <property type="entry name" value="aa-tRNA-synth_II/BPL/LPL"/>
</dbReference>
<dbReference type="InterPro" id="IPR004154">
    <property type="entry name" value="Anticodon-bd"/>
</dbReference>
<dbReference type="InterPro" id="IPR036621">
    <property type="entry name" value="Anticodon-bd_dom_sf"/>
</dbReference>
<dbReference type="InterPro" id="IPR002316">
    <property type="entry name" value="Pro-tRNA-ligase_IIa"/>
</dbReference>
<dbReference type="InterPro" id="IPR004500">
    <property type="entry name" value="Pro-tRNA-synth_IIa_bac-type"/>
</dbReference>
<dbReference type="InterPro" id="IPR023717">
    <property type="entry name" value="Pro-tRNA-Synthase_IIa_type1"/>
</dbReference>
<dbReference type="InterPro" id="IPR050062">
    <property type="entry name" value="Pro-tRNA_synthetase"/>
</dbReference>
<dbReference type="InterPro" id="IPR044140">
    <property type="entry name" value="ProRS_anticodon_short"/>
</dbReference>
<dbReference type="InterPro" id="IPR033730">
    <property type="entry name" value="ProRS_core_prok"/>
</dbReference>
<dbReference type="InterPro" id="IPR036754">
    <property type="entry name" value="YbaK/aa-tRNA-synt-asso_dom_sf"/>
</dbReference>
<dbReference type="InterPro" id="IPR007214">
    <property type="entry name" value="YbaK/aa-tRNA-synth-assoc-dom"/>
</dbReference>
<dbReference type="NCBIfam" id="NF006625">
    <property type="entry name" value="PRK09194.1"/>
    <property type="match status" value="1"/>
</dbReference>
<dbReference type="NCBIfam" id="TIGR00409">
    <property type="entry name" value="proS_fam_II"/>
    <property type="match status" value="1"/>
</dbReference>
<dbReference type="PANTHER" id="PTHR42753">
    <property type="entry name" value="MITOCHONDRIAL RIBOSOME PROTEIN L39/PROLYL-TRNA LIGASE FAMILY MEMBER"/>
    <property type="match status" value="1"/>
</dbReference>
<dbReference type="PANTHER" id="PTHR42753:SF2">
    <property type="entry name" value="PROLINE--TRNA LIGASE"/>
    <property type="match status" value="1"/>
</dbReference>
<dbReference type="Pfam" id="PF03129">
    <property type="entry name" value="HGTP_anticodon"/>
    <property type="match status" value="1"/>
</dbReference>
<dbReference type="Pfam" id="PF00587">
    <property type="entry name" value="tRNA-synt_2b"/>
    <property type="match status" value="1"/>
</dbReference>
<dbReference type="Pfam" id="PF04073">
    <property type="entry name" value="tRNA_edit"/>
    <property type="match status" value="1"/>
</dbReference>
<dbReference type="PIRSF" id="PIRSF001535">
    <property type="entry name" value="ProRS_1"/>
    <property type="match status" value="1"/>
</dbReference>
<dbReference type="PRINTS" id="PR01046">
    <property type="entry name" value="TRNASYNTHPRO"/>
</dbReference>
<dbReference type="SUPFAM" id="SSF52954">
    <property type="entry name" value="Class II aaRS ABD-related"/>
    <property type="match status" value="1"/>
</dbReference>
<dbReference type="SUPFAM" id="SSF55681">
    <property type="entry name" value="Class II aaRS and biotin synthetases"/>
    <property type="match status" value="1"/>
</dbReference>
<dbReference type="SUPFAM" id="SSF55826">
    <property type="entry name" value="YbaK/ProRS associated domain"/>
    <property type="match status" value="1"/>
</dbReference>
<dbReference type="PROSITE" id="PS50862">
    <property type="entry name" value="AA_TRNA_LIGASE_II"/>
    <property type="match status" value="1"/>
</dbReference>
<sequence length="568" mass="63349">MRQTMTFIPTLKEVPADAEVKSHQLLLRAGFIRQTASGIYSYLPLATLMLRKIEAIIREELEAIGAAELLLPALQPAELWQESGRWNDYGPELMRLKDRASRDFALGPTHEEVITALLRDEVKSYKRLPLTLYQIQTKFRDEKRPRFGLLRGREFIMKDAYSFHATSESLDEVYKLMHQAYSNIFTRCGLEFRSVIADSGSIGGNESKEFMALSEIGEDTIAYSDASDYAANTEMAPVLYMEKKSHELEKELEKVATANQKFIADIVEFLEVPIEKTIKSMLYQVDEEVIMVLVRGDHEVNDIKIKNALDATNVELVDPAVPVEILGANFGSLGPIGVPENIRVFADNAVKDIANAVVGANEDGYHYVNVNPNRDFEVTSYFDLRMIQAGDLSPDGQGVIKFAEGIEVGHIFKLGTKYSEAMNATILDENGRAQPIIMGCYGIGVSRILSAIAEQSNDENGLVWDKQISPFDLHLIPVNMKSEEQVAFAESLYDSLQKAGFSVLIDDRAERAGVKFADADLIGLPIRITVGKKAAEGIVEVKIRKTGEMIEVRQDELLNTLPILFGDK</sequence>
<comment type="function">
    <text evidence="1">Catalyzes the attachment of proline to tRNA(Pro) in a two-step reaction: proline is first activated by ATP to form Pro-AMP and then transferred to the acceptor end of tRNA(Pro). As ProRS can inadvertently accommodate and process non-cognate amino acids such as alanine and cysteine, to avoid such errors it has two additional distinct editing activities against alanine. One activity is designated as 'pretransfer' editing and involves the tRNA(Pro)-independent hydrolysis of activated Ala-AMP. The other activity is designated 'posttransfer' editing and involves deacylation of mischarged Ala-tRNA(Pro). The misacylated Cys-tRNA(Pro) is not edited by ProRS.</text>
</comment>
<comment type="catalytic activity">
    <reaction evidence="1">
        <text>tRNA(Pro) + L-proline + ATP = L-prolyl-tRNA(Pro) + AMP + diphosphate</text>
        <dbReference type="Rhea" id="RHEA:14305"/>
        <dbReference type="Rhea" id="RHEA-COMP:9700"/>
        <dbReference type="Rhea" id="RHEA-COMP:9702"/>
        <dbReference type="ChEBI" id="CHEBI:30616"/>
        <dbReference type="ChEBI" id="CHEBI:33019"/>
        <dbReference type="ChEBI" id="CHEBI:60039"/>
        <dbReference type="ChEBI" id="CHEBI:78442"/>
        <dbReference type="ChEBI" id="CHEBI:78532"/>
        <dbReference type="ChEBI" id="CHEBI:456215"/>
        <dbReference type="EC" id="6.1.1.15"/>
    </reaction>
</comment>
<comment type="subunit">
    <text evidence="1">Homodimer.</text>
</comment>
<comment type="subcellular location">
    <subcellularLocation>
        <location evidence="1">Cytoplasm</location>
    </subcellularLocation>
</comment>
<comment type="domain">
    <text evidence="1">Consists of three domains: the N-terminal catalytic domain, the editing domain and the C-terminal anticodon-binding domain.</text>
</comment>
<comment type="similarity">
    <text evidence="1">Belongs to the class-II aminoacyl-tRNA synthetase family. ProS type 1 subfamily.</text>
</comment>
<proteinExistence type="inferred from homology"/>
<gene>
    <name evidence="1" type="primary">proS</name>
    <name type="ordered locus">lwe1334</name>
</gene>
<feature type="chain" id="PRO_0000288344" description="Proline--tRNA ligase">
    <location>
        <begin position="1"/>
        <end position="568"/>
    </location>
</feature>
<accession>A0AIC0</accession>
<protein>
    <recommendedName>
        <fullName evidence="1">Proline--tRNA ligase</fullName>
        <ecNumber evidence="1">6.1.1.15</ecNumber>
    </recommendedName>
    <alternativeName>
        <fullName evidence="1">Prolyl-tRNA synthetase</fullName>
        <shortName evidence="1">ProRS</shortName>
    </alternativeName>
</protein>
<keyword id="KW-0030">Aminoacyl-tRNA synthetase</keyword>
<keyword id="KW-0067">ATP-binding</keyword>
<keyword id="KW-0963">Cytoplasm</keyword>
<keyword id="KW-0436">Ligase</keyword>
<keyword id="KW-0547">Nucleotide-binding</keyword>
<keyword id="KW-0648">Protein biosynthesis</keyword>
<name>SYP_LISW6</name>
<organism>
    <name type="scientific">Listeria welshimeri serovar 6b (strain ATCC 35897 / DSM 20650 / CCUG 15529 / CIP 8149 / NCTC 11857 / SLCC 5334 / V8)</name>
    <dbReference type="NCBI Taxonomy" id="386043"/>
    <lineage>
        <taxon>Bacteria</taxon>
        <taxon>Bacillati</taxon>
        <taxon>Bacillota</taxon>
        <taxon>Bacilli</taxon>
        <taxon>Bacillales</taxon>
        <taxon>Listeriaceae</taxon>
        <taxon>Listeria</taxon>
    </lineage>
</organism>
<reference key="1">
    <citation type="journal article" date="2006" name="J. Bacteriol.">
        <title>Whole-genome sequence of Listeria welshimeri reveals common steps in genome reduction with Listeria innocua as compared to Listeria monocytogenes.</title>
        <authorList>
            <person name="Hain T."/>
            <person name="Steinweg C."/>
            <person name="Kuenne C.T."/>
            <person name="Billion A."/>
            <person name="Ghai R."/>
            <person name="Chatterjee S.S."/>
            <person name="Domann E."/>
            <person name="Kaerst U."/>
            <person name="Goesmann A."/>
            <person name="Bekel T."/>
            <person name="Bartels D."/>
            <person name="Kaiser O."/>
            <person name="Meyer F."/>
            <person name="Puehler A."/>
            <person name="Weisshaar B."/>
            <person name="Wehland J."/>
            <person name="Liang C."/>
            <person name="Dandekar T."/>
            <person name="Lampidis R."/>
            <person name="Kreft J."/>
            <person name="Goebel W."/>
            <person name="Chakraborty T."/>
        </authorList>
    </citation>
    <scope>NUCLEOTIDE SEQUENCE [LARGE SCALE GENOMIC DNA]</scope>
    <source>
        <strain>ATCC 35897 / DSM 20650 / CCUG 15529 / CIP 8149 / NCTC 11857 / SLCC 5334 / V8</strain>
    </source>
</reference>
<evidence type="ECO:0000255" key="1">
    <source>
        <dbReference type="HAMAP-Rule" id="MF_01569"/>
    </source>
</evidence>